<dbReference type="EC" id="2.7.4.3" evidence="1"/>
<dbReference type="EMBL" id="AJ965256">
    <property type="protein sequence ID" value="CAI82660.1"/>
    <property type="molecule type" value="Genomic_DNA"/>
</dbReference>
<dbReference type="RefSeq" id="WP_011309015.1">
    <property type="nucleotide sequence ID" value="NC_007356.1"/>
</dbReference>
<dbReference type="SMR" id="Q3ZZQ3"/>
<dbReference type="KEGG" id="deh:cbdbA459"/>
<dbReference type="HOGENOM" id="CLU_032354_1_2_0"/>
<dbReference type="UniPathway" id="UPA00588">
    <property type="reaction ID" value="UER00649"/>
</dbReference>
<dbReference type="Proteomes" id="UP000000433">
    <property type="component" value="Chromosome"/>
</dbReference>
<dbReference type="GO" id="GO:0005737">
    <property type="term" value="C:cytoplasm"/>
    <property type="evidence" value="ECO:0007669"/>
    <property type="project" value="UniProtKB-SubCell"/>
</dbReference>
<dbReference type="GO" id="GO:0004017">
    <property type="term" value="F:adenylate kinase activity"/>
    <property type="evidence" value="ECO:0007669"/>
    <property type="project" value="UniProtKB-UniRule"/>
</dbReference>
<dbReference type="GO" id="GO:0005524">
    <property type="term" value="F:ATP binding"/>
    <property type="evidence" value="ECO:0007669"/>
    <property type="project" value="UniProtKB-UniRule"/>
</dbReference>
<dbReference type="GO" id="GO:0046872">
    <property type="term" value="F:metal ion binding"/>
    <property type="evidence" value="ECO:0007669"/>
    <property type="project" value="UniProtKB-KW"/>
</dbReference>
<dbReference type="GO" id="GO:0044209">
    <property type="term" value="P:AMP salvage"/>
    <property type="evidence" value="ECO:0007669"/>
    <property type="project" value="UniProtKB-UniRule"/>
</dbReference>
<dbReference type="CDD" id="cd01428">
    <property type="entry name" value="ADK"/>
    <property type="match status" value="1"/>
</dbReference>
<dbReference type="Gene3D" id="3.40.50.300">
    <property type="entry name" value="P-loop containing nucleotide triphosphate hydrolases"/>
    <property type="match status" value="1"/>
</dbReference>
<dbReference type="HAMAP" id="MF_00235">
    <property type="entry name" value="Adenylate_kinase_Adk"/>
    <property type="match status" value="1"/>
</dbReference>
<dbReference type="InterPro" id="IPR006259">
    <property type="entry name" value="Adenyl_kin_sub"/>
</dbReference>
<dbReference type="InterPro" id="IPR000850">
    <property type="entry name" value="Adenylat/UMP-CMP_kin"/>
</dbReference>
<dbReference type="InterPro" id="IPR033690">
    <property type="entry name" value="Adenylat_kinase_CS"/>
</dbReference>
<dbReference type="InterPro" id="IPR027417">
    <property type="entry name" value="P-loop_NTPase"/>
</dbReference>
<dbReference type="NCBIfam" id="TIGR01351">
    <property type="entry name" value="adk"/>
    <property type="match status" value="1"/>
</dbReference>
<dbReference type="NCBIfam" id="NF001381">
    <property type="entry name" value="PRK00279.1-3"/>
    <property type="match status" value="1"/>
</dbReference>
<dbReference type="NCBIfam" id="NF011100">
    <property type="entry name" value="PRK14527.1"/>
    <property type="match status" value="1"/>
</dbReference>
<dbReference type="PANTHER" id="PTHR23359">
    <property type="entry name" value="NUCLEOTIDE KINASE"/>
    <property type="match status" value="1"/>
</dbReference>
<dbReference type="Pfam" id="PF00406">
    <property type="entry name" value="ADK"/>
    <property type="match status" value="1"/>
</dbReference>
<dbReference type="PRINTS" id="PR00094">
    <property type="entry name" value="ADENYLTKNASE"/>
</dbReference>
<dbReference type="SUPFAM" id="SSF52540">
    <property type="entry name" value="P-loop containing nucleoside triphosphate hydrolases"/>
    <property type="match status" value="1"/>
</dbReference>
<dbReference type="PROSITE" id="PS00113">
    <property type="entry name" value="ADENYLATE_KINASE"/>
    <property type="match status" value="1"/>
</dbReference>
<organism>
    <name type="scientific">Dehalococcoides mccartyi (strain CBDB1)</name>
    <dbReference type="NCBI Taxonomy" id="255470"/>
    <lineage>
        <taxon>Bacteria</taxon>
        <taxon>Bacillati</taxon>
        <taxon>Chloroflexota</taxon>
        <taxon>Dehalococcoidia</taxon>
        <taxon>Dehalococcoidales</taxon>
        <taxon>Dehalococcoidaceae</taxon>
        <taxon>Dehalococcoides</taxon>
    </lineage>
</organism>
<keyword id="KW-0067">ATP-binding</keyword>
<keyword id="KW-0963">Cytoplasm</keyword>
<keyword id="KW-0418">Kinase</keyword>
<keyword id="KW-0479">Metal-binding</keyword>
<keyword id="KW-0545">Nucleotide biosynthesis</keyword>
<keyword id="KW-0547">Nucleotide-binding</keyword>
<keyword id="KW-0808">Transferase</keyword>
<keyword id="KW-0862">Zinc</keyword>
<evidence type="ECO:0000255" key="1">
    <source>
        <dbReference type="HAMAP-Rule" id="MF_00235"/>
    </source>
</evidence>
<reference key="1">
    <citation type="journal article" date="2005" name="Nat. Biotechnol.">
        <title>Genome sequence of the chlorinated compound-respiring bacterium Dehalococcoides species strain CBDB1.</title>
        <authorList>
            <person name="Kube M."/>
            <person name="Beck A."/>
            <person name="Zinder S.H."/>
            <person name="Kuhl H."/>
            <person name="Reinhardt R."/>
            <person name="Adrian L."/>
        </authorList>
    </citation>
    <scope>NUCLEOTIDE SEQUENCE [LARGE SCALE GENOMIC DNA]</scope>
    <source>
        <strain>CBDB1</strain>
    </source>
</reference>
<proteinExistence type="inferred from homology"/>
<gene>
    <name evidence="1" type="primary">adk</name>
    <name type="ordered locus">cbdbA459</name>
</gene>
<name>KAD_DEHMC</name>
<feature type="chain" id="PRO_1000071798" description="Adenylate kinase">
    <location>
        <begin position="1"/>
        <end position="216"/>
    </location>
</feature>
<feature type="region of interest" description="NMP" evidence="1">
    <location>
        <begin position="31"/>
        <end position="60"/>
    </location>
</feature>
<feature type="region of interest" description="LID" evidence="1">
    <location>
        <begin position="127"/>
        <end position="163"/>
    </location>
</feature>
<feature type="binding site" evidence="1">
    <location>
        <begin position="11"/>
        <end position="16"/>
    </location>
    <ligand>
        <name>ATP</name>
        <dbReference type="ChEBI" id="CHEBI:30616"/>
    </ligand>
</feature>
<feature type="binding site" evidence="1">
    <location>
        <position position="32"/>
    </location>
    <ligand>
        <name>AMP</name>
        <dbReference type="ChEBI" id="CHEBI:456215"/>
    </ligand>
</feature>
<feature type="binding site" evidence="1">
    <location>
        <position position="37"/>
    </location>
    <ligand>
        <name>AMP</name>
        <dbReference type="ChEBI" id="CHEBI:456215"/>
    </ligand>
</feature>
<feature type="binding site" evidence="1">
    <location>
        <begin position="58"/>
        <end position="60"/>
    </location>
    <ligand>
        <name>AMP</name>
        <dbReference type="ChEBI" id="CHEBI:456215"/>
    </ligand>
</feature>
<feature type="binding site" evidence="1">
    <location>
        <begin position="86"/>
        <end position="89"/>
    </location>
    <ligand>
        <name>AMP</name>
        <dbReference type="ChEBI" id="CHEBI:456215"/>
    </ligand>
</feature>
<feature type="binding site" evidence="1">
    <location>
        <position position="93"/>
    </location>
    <ligand>
        <name>AMP</name>
        <dbReference type="ChEBI" id="CHEBI:456215"/>
    </ligand>
</feature>
<feature type="binding site" evidence="1">
    <location>
        <position position="128"/>
    </location>
    <ligand>
        <name>ATP</name>
        <dbReference type="ChEBI" id="CHEBI:30616"/>
    </ligand>
</feature>
<feature type="binding site" evidence="1">
    <location>
        <position position="131"/>
    </location>
    <ligand>
        <name>Zn(2+)</name>
        <dbReference type="ChEBI" id="CHEBI:29105"/>
        <note>structural</note>
    </ligand>
</feature>
<feature type="binding site" evidence="1">
    <location>
        <position position="134"/>
    </location>
    <ligand>
        <name>Zn(2+)</name>
        <dbReference type="ChEBI" id="CHEBI:29105"/>
        <note>structural</note>
    </ligand>
</feature>
<feature type="binding site" evidence="1">
    <location>
        <position position="150"/>
    </location>
    <ligand>
        <name>Zn(2+)</name>
        <dbReference type="ChEBI" id="CHEBI:29105"/>
        <note>structural</note>
    </ligand>
</feature>
<feature type="binding site" evidence="1">
    <location>
        <position position="153"/>
    </location>
    <ligand>
        <name>Zn(2+)</name>
        <dbReference type="ChEBI" id="CHEBI:29105"/>
        <note>structural</note>
    </ligand>
</feature>
<feature type="binding site" evidence="1">
    <location>
        <position position="160"/>
    </location>
    <ligand>
        <name>AMP</name>
        <dbReference type="ChEBI" id="CHEBI:456215"/>
    </ligand>
</feature>
<feature type="binding site" evidence="1">
    <location>
        <position position="171"/>
    </location>
    <ligand>
        <name>AMP</name>
        <dbReference type="ChEBI" id="CHEBI:456215"/>
    </ligand>
</feature>
<feature type="binding site" evidence="1">
    <location>
        <position position="199"/>
    </location>
    <ligand>
        <name>ATP</name>
        <dbReference type="ChEBI" id="CHEBI:30616"/>
    </ligand>
</feature>
<protein>
    <recommendedName>
        <fullName evidence="1">Adenylate kinase</fullName>
        <shortName evidence="1">AK</shortName>
        <ecNumber evidence="1">2.7.4.3</ecNumber>
    </recommendedName>
    <alternativeName>
        <fullName evidence="1">ATP-AMP transphosphorylase</fullName>
    </alternativeName>
    <alternativeName>
        <fullName evidence="1">ATP:AMP phosphotransferase</fullName>
    </alternativeName>
    <alternativeName>
        <fullName evidence="1">Adenylate monophosphate kinase</fullName>
    </alternativeName>
</protein>
<sequence length="216" mass="23633">MYNVIFLGAPGSGKGTQGEVVAKELKLAHMATGDLFRKAIECGDELGDTVKSYMERGELVPDEITISVVLKHLAGLTDVTGIILDGFPRSLRQAEALDEALVQQGQGIGRVIYINVPGDELVRRLSGRWVCRSCQSPYQSGCAEVTKGKCSRCQGGLYQRPDDTPETVKERLKVYFSKTAPLIEYYRSKGKLSEIDGMAEISEVTKRIISAIKCGK</sequence>
<comment type="function">
    <text evidence="1">Catalyzes the reversible transfer of the terminal phosphate group between ATP and AMP. Plays an important role in cellular energy homeostasis and in adenine nucleotide metabolism.</text>
</comment>
<comment type="catalytic activity">
    <reaction evidence="1">
        <text>AMP + ATP = 2 ADP</text>
        <dbReference type="Rhea" id="RHEA:12973"/>
        <dbReference type="ChEBI" id="CHEBI:30616"/>
        <dbReference type="ChEBI" id="CHEBI:456215"/>
        <dbReference type="ChEBI" id="CHEBI:456216"/>
        <dbReference type="EC" id="2.7.4.3"/>
    </reaction>
</comment>
<comment type="pathway">
    <text evidence="1">Purine metabolism; AMP biosynthesis via salvage pathway; AMP from ADP: step 1/1.</text>
</comment>
<comment type="subunit">
    <text evidence="1">Monomer.</text>
</comment>
<comment type="subcellular location">
    <subcellularLocation>
        <location evidence="1">Cytoplasm</location>
    </subcellularLocation>
</comment>
<comment type="domain">
    <text evidence="1">Consists of three domains, a large central CORE domain and two small peripheral domains, NMPbind and LID, which undergo movements during catalysis. The LID domain closes over the site of phosphoryl transfer upon ATP binding. Assembling and dissambling the active center during each catalytic cycle provides an effective means to prevent ATP hydrolysis. Some bacteria have evolved a zinc-coordinating structure that stabilizes the LID domain.</text>
</comment>
<comment type="similarity">
    <text evidence="1">Belongs to the adenylate kinase family.</text>
</comment>
<accession>Q3ZZQ3</accession>